<organism>
    <name type="scientific">Salmonella paratyphi A (strain AKU_12601)</name>
    <dbReference type="NCBI Taxonomy" id="554290"/>
    <lineage>
        <taxon>Bacteria</taxon>
        <taxon>Pseudomonadati</taxon>
        <taxon>Pseudomonadota</taxon>
        <taxon>Gammaproteobacteria</taxon>
        <taxon>Enterobacterales</taxon>
        <taxon>Enterobacteriaceae</taxon>
        <taxon>Salmonella</taxon>
    </lineage>
</organism>
<gene>
    <name evidence="1" type="primary">lpxB</name>
    <name type="ordered locus">SSPA0228</name>
</gene>
<proteinExistence type="inferred from homology"/>
<comment type="function">
    <text evidence="1">Condensation of UDP-2,3-diacylglucosamine and 2,3-diacylglucosamine-1-phosphate to form lipid A disaccharide, a precursor of lipid A, a phosphorylated glycolipid that anchors the lipopolysaccharide to the outer membrane of the cell.</text>
</comment>
<comment type="catalytic activity">
    <reaction evidence="1">
        <text>2-N,3-O-bis[(3R)-3-hydroxytetradecanoyl]-alpha-D-glucosaminyl 1-phosphate + UDP-2-N,3-O-bis[(3R)-3-hydroxytetradecanoyl]-alpha-D-glucosamine = lipid A disaccharide (E. coli) + UDP + H(+)</text>
        <dbReference type="Rhea" id="RHEA:22668"/>
        <dbReference type="ChEBI" id="CHEBI:15378"/>
        <dbReference type="ChEBI" id="CHEBI:57957"/>
        <dbReference type="ChEBI" id="CHEBI:58223"/>
        <dbReference type="ChEBI" id="CHEBI:58466"/>
        <dbReference type="ChEBI" id="CHEBI:78847"/>
    </reaction>
</comment>
<comment type="catalytic activity">
    <reaction evidence="1">
        <text>a lipid X + a UDP-2-N,3-O-bis[(3R)-3-hydroxyacyl]-alpha-D-glucosamine = a lipid A disaccharide + UDP + H(+)</text>
        <dbReference type="Rhea" id="RHEA:67828"/>
        <dbReference type="ChEBI" id="CHEBI:15378"/>
        <dbReference type="ChEBI" id="CHEBI:58223"/>
        <dbReference type="ChEBI" id="CHEBI:137748"/>
        <dbReference type="ChEBI" id="CHEBI:176338"/>
        <dbReference type="ChEBI" id="CHEBI:176343"/>
        <dbReference type="EC" id="2.4.1.182"/>
    </reaction>
</comment>
<comment type="pathway">
    <text evidence="1">Glycolipid biosynthesis; lipid IV(A) biosynthesis; lipid IV(A) from (3R)-3-hydroxytetradecanoyl-[acyl-carrier-protein] and UDP-N-acetyl-alpha-D-glucosamine: step 5/6.</text>
</comment>
<comment type="similarity">
    <text evidence="1">Belongs to the LpxB family.</text>
</comment>
<protein>
    <recommendedName>
        <fullName evidence="1">Lipid-A-disaccharide synthase</fullName>
        <ecNumber evidence="1">2.4.1.182</ecNumber>
    </recommendedName>
</protein>
<feature type="chain" id="PRO_1000123063" description="Lipid-A-disaccharide synthase">
    <location>
        <begin position="1"/>
        <end position="382"/>
    </location>
</feature>
<reference key="1">
    <citation type="journal article" date="2009" name="BMC Genomics">
        <title>Pseudogene accumulation in the evolutionary histories of Salmonella enterica serovars Paratyphi A and Typhi.</title>
        <authorList>
            <person name="Holt K.E."/>
            <person name="Thomson N.R."/>
            <person name="Wain J."/>
            <person name="Langridge G.C."/>
            <person name="Hasan R."/>
            <person name="Bhutta Z.A."/>
            <person name="Quail M.A."/>
            <person name="Norbertczak H."/>
            <person name="Walker D."/>
            <person name="Simmonds M."/>
            <person name="White B."/>
            <person name="Bason N."/>
            <person name="Mungall K."/>
            <person name="Dougan G."/>
            <person name="Parkhill J."/>
        </authorList>
    </citation>
    <scope>NUCLEOTIDE SEQUENCE [LARGE SCALE GENOMIC DNA]</scope>
    <source>
        <strain>AKU_12601</strain>
    </source>
</reference>
<evidence type="ECO:0000255" key="1">
    <source>
        <dbReference type="HAMAP-Rule" id="MF_00392"/>
    </source>
</evidence>
<accession>B5BAN9</accession>
<sequence>MAAQRPLTIALVAGETSGDILGAGLIRALKARVPNARFVGVAGPRMQAEGCEAWYEMEELAVMGIVEVLGRLRRLLHIRADLTRRFTELKPDVFVGIDAPDFNITLEGNLKKQGIKTIHYVSPSVWAWRQKRVFKIGRSTHMVLAFLPFEKAFYDKFNVPCRFIGHTMADAMPLDPDKNAARDVLGIPHDAHCLALLPGSRGAEVEMLSADFLKTAQLLRQRYPDLEVVVPLVNAKRREQFEKIKAEVAPDLAVHLLDGMAREAMIASDAALLASGTAALECMLAKCPMVVGYRMKSFTFWLAKRLVKTEYVSLPNLLAGRELVKELLQEECEPQKLAEALLPLLANGKTSHAMHDTFRELHQQIRCNADEQAADAVLELAQ</sequence>
<keyword id="KW-0328">Glycosyltransferase</keyword>
<keyword id="KW-0441">Lipid A biosynthesis</keyword>
<keyword id="KW-0444">Lipid biosynthesis</keyword>
<keyword id="KW-0443">Lipid metabolism</keyword>
<keyword id="KW-0808">Transferase</keyword>
<name>LPXB_SALPK</name>
<dbReference type="EC" id="2.4.1.182" evidence="1"/>
<dbReference type="EMBL" id="FM200053">
    <property type="protein sequence ID" value="CAR58342.1"/>
    <property type="molecule type" value="Genomic_DNA"/>
</dbReference>
<dbReference type="RefSeq" id="WP_000741218.1">
    <property type="nucleotide sequence ID" value="NC_011147.1"/>
</dbReference>
<dbReference type="SMR" id="B5BAN9"/>
<dbReference type="CAZy" id="GT19">
    <property type="family name" value="Glycosyltransferase Family 19"/>
</dbReference>
<dbReference type="KEGG" id="sek:SSPA0228"/>
<dbReference type="HOGENOM" id="CLU_036577_3_0_6"/>
<dbReference type="UniPathway" id="UPA00359">
    <property type="reaction ID" value="UER00481"/>
</dbReference>
<dbReference type="Proteomes" id="UP000001869">
    <property type="component" value="Chromosome"/>
</dbReference>
<dbReference type="GO" id="GO:0016020">
    <property type="term" value="C:membrane"/>
    <property type="evidence" value="ECO:0007669"/>
    <property type="project" value="GOC"/>
</dbReference>
<dbReference type="GO" id="GO:0008915">
    <property type="term" value="F:lipid-A-disaccharide synthase activity"/>
    <property type="evidence" value="ECO:0007669"/>
    <property type="project" value="UniProtKB-UniRule"/>
</dbReference>
<dbReference type="GO" id="GO:0005543">
    <property type="term" value="F:phospholipid binding"/>
    <property type="evidence" value="ECO:0007669"/>
    <property type="project" value="TreeGrafter"/>
</dbReference>
<dbReference type="GO" id="GO:0009245">
    <property type="term" value="P:lipid A biosynthetic process"/>
    <property type="evidence" value="ECO:0007669"/>
    <property type="project" value="UniProtKB-UniRule"/>
</dbReference>
<dbReference type="CDD" id="cd01635">
    <property type="entry name" value="Glycosyltransferase_GTB-type"/>
    <property type="match status" value="1"/>
</dbReference>
<dbReference type="HAMAP" id="MF_00392">
    <property type="entry name" value="LpxB"/>
    <property type="match status" value="1"/>
</dbReference>
<dbReference type="InterPro" id="IPR003835">
    <property type="entry name" value="Glyco_trans_19"/>
</dbReference>
<dbReference type="NCBIfam" id="TIGR00215">
    <property type="entry name" value="lpxB"/>
    <property type="match status" value="1"/>
</dbReference>
<dbReference type="PANTHER" id="PTHR30372">
    <property type="entry name" value="LIPID-A-DISACCHARIDE SYNTHASE"/>
    <property type="match status" value="1"/>
</dbReference>
<dbReference type="PANTHER" id="PTHR30372:SF4">
    <property type="entry name" value="LIPID-A-DISACCHARIDE SYNTHASE, MITOCHONDRIAL-RELATED"/>
    <property type="match status" value="1"/>
</dbReference>
<dbReference type="Pfam" id="PF02684">
    <property type="entry name" value="LpxB"/>
    <property type="match status" value="1"/>
</dbReference>
<dbReference type="SUPFAM" id="SSF53756">
    <property type="entry name" value="UDP-Glycosyltransferase/glycogen phosphorylase"/>
    <property type="match status" value="1"/>
</dbReference>